<comment type="function">
    <text evidence="1">Involved in the regulation of the intracellular balance of NAD and NADP, and is a key enzyme in the biosynthesis of NADP. Catalyzes specifically the phosphorylation on 2'-hydroxyl of the adenosine moiety of NAD to yield NADP.</text>
</comment>
<comment type="catalytic activity">
    <reaction evidence="1">
        <text>NAD(+) + ATP = ADP + NADP(+) + H(+)</text>
        <dbReference type="Rhea" id="RHEA:18629"/>
        <dbReference type="ChEBI" id="CHEBI:15378"/>
        <dbReference type="ChEBI" id="CHEBI:30616"/>
        <dbReference type="ChEBI" id="CHEBI:57540"/>
        <dbReference type="ChEBI" id="CHEBI:58349"/>
        <dbReference type="ChEBI" id="CHEBI:456216"/>
        <dbReference type="EC" id="2.7.1.23"/>
    </reaction>
</comment>
<comment type="cofactor">
    <cofactor evidence="1">
        <name>a divalent metal cation</name>
        <dbReference type="ChEBI" id="CHEBI:60240"/>
    </cofactor>
</comment>
<comment type="subcellular location">
    <subcellularLocation>
        <location evidence="1">Cytoplasm</location>
    </subcellularLocation>
</comment>
<comment type="similarity">
    <text evidence="1">Belongs to the NAD kinase family.</text>
</comment>
<keyword id="KW-0067">ATP-binding</keyword>
<keyword id="KW-0963">Cytoplasm</keyword>
<keyword id="KW-0418">Kinase</keyword>
<keyword id="KW-0520">NAD</keyword>
<keyword id="KW-0521">NADP</keyword>
<keyword id="KW-0547">Nucleotide-binding</keyword>
<keyword id="KW-0808">Transferase</keyword>
<feature type="chain" id="PRO_1000005400" description="NAD kinase">
    <location>
        <begin position="1"/>
        <end position="286"/>
    </location>
</feature>
<feature type="active site" description="Proton acceptor" evidence="1">
    <location>
        <position position="74"/>
    </location>
</feature>
<feature type="binding site" evidence="1">
    <location>
        <begin position="74"/>
        <end position="75"/>
    </location>
    <ligand>
        <name>NAD(+)</name>
        <dbReference type="ChEBI" id="CHEBI:57540"/>
    </ligand>
</feature>
<feature type="binding site" evidence="1">
    <location>
        <begin position="148"/>
        <end position="149"/>
    </location>
    <ligand>
        <name>NAD(+)</name>
        <dbReference type="ChEBI" id="CHEBI:57540"/>
    </ligand>
</feature>
<feature type="binding site" evidence="1">
    <location>
        <position position="178"/>
    </location>
    <ligand>
        <name>NAD(+)</name>
        <dbReference type="ChEBI" id="CHEBI:57540"/>
    </ligand>
</feature>
<feature type="binding site" evidence="1">
    <location>
        <position position="186"/>
    </location>
    <ligand>
        <name>NAD(+)</name>
        <dbReference type="ChEBI" id="CHEBI:57540"/>
    </ligand>
</feature>
<feature type="binding site" evidence="1">
    <location>
        <begin position="189"/>
        <end position="194"/>
    </location>
    <ligand>
        <name>NAD(+)</name>
        <dbReference type="ChEBI" id="CHEBI:57540"/>
    </ligand>
</feature>
<feature type="binding site" evidence="1">
    <location>
        <position position="244"/>
    </location>
    <ligand>
        <name>NAD(+)</name>
        <dbReference type="ChEBI" id="CHEBI:57540"/>
    </ligand>
</feature>
<gene>
    <name evidence="1" type="primary">nadK</name>
    <name type="ordered locus">CJJ81176_0669</name>
</gene>
<accession>A1VZ01</accession>
<reference key="1">
    <citation type="submission" date="2006-12" db="EMBL/GenBank/DDBJ databases">
        <authorList>
            <person name="Fouts D.E."/>
            <person name="Nelson K.E."/>
            <person name="Sebastian Y."/>
        </authorList>
    </citation>
    <scope>NUCLEOTIDE SEQUENCE [LARGE SCALE GENOMIC DNA]</scope>
    <source>
        <strain>81-176</strain>
    </source>
</reference>
<sequence>MQNKIDHKNIKTIGLVTRPNVSLDKEILKLQSILSIYKVELVLFKESSEILDLPKYGLDDLFKISDFVISLGGDGTLISLCRKACEYDKAVLGIHAGHLGFLTDFKVDEAENFFQAFFQGEFRIEKPYLLSVFLEDKQGKILEKLAFNDVVISKNNQASMAHIEVFRKEKKFNEYFGDGLIVATPAGSTAYNLSANGPIVYTLAQAFILTPVCSHSLTQRPIVLPKGFEIEIMAKDCILCIDGQENYKMNDFKSIKVGLSDKNVALIHPKNRDYFQILKEKLHWGN</sequence>
<organism>
    <name type="scientific">Campylobacter jejuni subsp. jejuni serotype O:23/36 (strain 81-176)</name>
    <dbReference type="NCBI Taxonomy" id="354242"/>
    <lineage>
        <taxon>Bacteria</taxon>
        <taxon>Pseudomonadati</taxon>
        <taxon>Campylobacterota</taxon>
        <taxon>Epsilonproteobacteria</taxon>
        <taxon>Campylobacterales</taxon>
        <taxon>Campylobacteraceae</taxon>
        <taxon>Campylobacter</taxon>
    </lineage>
</organism>
<dbReference type="EC" id="2.7.1.23" evidence="1"/>
<dbReference type="EMBL" id="CP000538">
    <property type="protein sequence ID" value="EAQ72980.1"/>
    <property type="molecule type" value="Genomic_DNA"/>
</dbReference>
<dbReference type="RefSeq" id="WP_002855276.1">
    <property type="nucleotide sequence ID" value="NC_008787.1"/>
</dbReference>
<dbReference type="SMR" id="A1VZ01"/>
<dbReference type="KEGG" id="cjj:CJJ81176_0669"/>
<dbReference type="eggNOG" id="COG0061">
    <property type="taxonomic scope" value="Bacteria"/>
</dbReference>
<dbReference type="HOGENOM" id="CLU_008831_0_3_7"/>
<dbReference type="Proteomes" id="UP000000646">
    <property type="component" value="Chromosome"/>
</dbReference>
<dbReference type="GO" id="GO:0005737">
    <property type="term" value="C:cytoplasm"/>
    <property type="evidence" value="ECO:0007669"/>
    <property type="project" value="UniProtKB-SubCell"/>
</dbReference>
<dbReference type="GO" id="GO:0005524">
    <property type="term" value="F:ATP binding"/>
    <property type="evidence" value="ECO:0007669"/>
    <property type="project" value="UniProtKB-KW"/>
</dbReference>
<dbReference type="GO" id="GO:0046872">
    <property type="term" value="F:metal ion binding"/>
    <property type="evidence" value="ECO:0007669"/>
    <property type="project" value="UniProtKB-UniRule"/>
</dbReference>
<dbReference type="GO" id="GO:0051287">
    <property type="term" value="F:NAD binding"/>
    <property type="evidence" value="ECO:0007669"/>
    <property type="project" value="UniProtKB-ARBA"/>
</dbReference>
<dbReference type="GO" id="GO:0003951">
    <property type="term" value="F:NAD+ kinase activity"/>
    <property type="evidence" value="ECO:0007669"/>
    <property type="project" value="UniProtKB-UniRule"/>
</dbReference>
<dbReference type="GO" id="GO:0019674">
    <property type="term" value="P:NAD metabolic process"/>
    <property type="evidence" value="ECO:0007669"/>
    <property type="project" value="InterPro"/>
</dbReference>
<dbReference type="GO" id="GO:0006741">
    <property type="term" value="P:NADP biosynthetic process"/>
    <property type="evidence" value="ECO:0007669"/>
    <property type="project" value="UniProtKB-UniRule"/>
</dbReference>
<dbReference type="Gene3D" id="3.40.50.10330">
    <property type="entry name" value="Probable inorganic polyphosphate/atp-NAD kinase, domain 1"/>
    <property type="match status" value="1"/>
</dbReference>
<dbReference type="Gene3D" id="2.60.200.30">
    <property type="entry name" value="Probable inorganic polyphosphate/atp-NAD kinase, domain 2"/>
    <property type="match status" value="1"/>
</dbReference>
<dbReference type="HAMAP" id="MF_00361">
    <property type="entry name" value="NAD_kinase"/>
    <property type="match status" value="1"/>
</dbReference>
<dbReference type="InterPro" id="IPR017438">
    <property type="entry name" value="ATP-NAD_kinase_N"/>
</dbReference>
<dbReference type="InterPro" id="IPR017437">
    <property type="entry name" value="ATP-NAD_kinase_PpnK-typ_C"/>
</dbReference>
<dbReference type="InterPro" id="IPR016064">
    <property type="entry name" value="NAD/diacylglycerol_kinase_sf"/>
</dbReference>
<dbReference type="InterPro" id="IPR002504">
    <property type="entry name" value="NADK"/>
</dbReference>
<dbReference type="NCBIfam" id="NF010679">
    <property type="entry name" value="PRK14077.1"/>
    <property type="match status" value="1"/>
</dbReference>
<dbReference type="PANTHER" id="PTHR20275">
    <property type="entry name" value="NAD KINASE"/>
    <property type="match status" value="1"/>
</dbReference>
<dbReference type="PANTHER" id="PTHR20275:SF0">
    <property type="entry name" value="NAD KINASE"/>
    <property type="match status" value="1"/>
</dbReference>
<dbReference type="Pfam" id="PF01513">
    <property type="entry name" value="NAD_kinase"/>
    <property type="match status" value="1"/>
</dbReference>
<dbReference type="Pfam" id="PF20143">
    <property type="entry name" value="NAD_kinase_C"/>
    <property type="match status" value="1"/>
</dbReference>
<dbReference type="SUPFAM" id="SSF111331">
    <property type="entry name" value="NAD kinase/diacylglycerol kinase-like"/>
    <property type="match status" value="1"/>
</dbReference>
<evidence type="ECO:0000255" key="1">
    <source>
        <dbReference type="HAMAP-Rule" id="MF_00361"/>
    </source>
</evidence>
<proteinExistence type="inferred from homology"/>
<protein>
    <recommendedName>
        <fullName evidence="1">NAD kinase</fullName>
        <ecNumber evidence="1">2.7.1.23</ecNumber>
    </recommendedName>
    <alternativeName>
        <fullName evidence="1">ATP-dependent NAD kinase</fullName>
    </alternativeName>
</protein>
<name>NADK_CAMJJ</name>